<gene>
    <name evidence="1" type="primary">aas</name>
    <name type="ordered locus">SNSL254_A3238</name>
</gene>
<evidence type="ECO:0000255" key="1">
    <source>
        <dbReference type="HAMAP-Rule" id="MF_01162"/>
    </source>
</evidence>
<comment type="function">
    <text evidence="1">Plays a role in lysophospholipid acylation. Transfers fatty acids to the 1-position via an enzyme-bound acyl-ACP intermediate in the presence of ATP and magnesium. Its physiological function is to regenerate phosphatidylethanolamine from 2-acyl-glycero-3-phosphoethanolamine (2-acyl-GPE) formed by transacylation reactions or degradation by phospholipase A1.</text>
</comment>
<comment type="catalytic activity">
    <reaction evidence="1">
        <text>a 2-acyl-sn-glycero-3-phosphoethanolamine + a fatty acyl-[ACP] = a 1,2-diacyl-sn-glycero-3-phosphoethanolamine + holo-[ACP]</text>
        <dbReference type="Rhea" id="RHEA:10304"/>
        <dbReference type="Rhea" id="RHEA-COMP:9685"/>
        <dbReference type="Rhea" id="RHEA-COMP:14125"/>
        <dbReference type="ChEBI" id="CHEBI:64479"/>
        <dbReference type="ChEBI" id="CHEBI:64612"/>
        <dbReference type="ChEBI" id="CHEBI:65213"/>
        <dbReference type="ChEBI" id="CHEBI:138651"/>
        <dbReference type="EC" id="2.3.1.40"/>
    </reaction>
</comment>
<comment type="catalytic activity">
    <reaction evidence="1">
        <text>a long-chain fatty acid + holo-[ACP] + ATP = a long-chain fatty acyl-[ACP] + AMP + diphosphate</text>
        <dbReference type="Rhea" id="RHEA:45588"/>
        <dbReference type="Rhea" id="RHEA-COMP:9685"/>
        <dbReference type="Rhea" id="RHEA-COMP:12682"/>
        <dbReference type="ChEBI" id="CHEBI:30616"/>
        <dbReference type="ChEBI" id="CHEBI:33019"/>
        <dbReference type="ChEBI" id="CHEBI:57560"/>
        <dbReference type="ChEBI" id="CHEBI:64479"/>
        <dbReference type="ChEBI" id="CHEBI:133243"/>
        <dbReference type="ChEBI" id="CHEBI:456215"/>
        <dbReference type="EC" id="6.2.1.20"/>
    </reaction>
</comment>
<comment type="subcellular location">
    <subcellularLocation>
        <location evidence="1">Cell inner membrane</location>
        <topology evidence="1">Multi-pass membrane protein</topology>
    </subcellularLocation>
</comment>
<comment type="similarity">
    <text evidence="1">In the N-terminal section; belongs to the 2-acyl-GPE acetyltransferase family.</text>
</comment>
<comment type="similarity">
    <text evidence="1">In the C-terminal section; belongs to the ATP-dependent AMP-binding enzyme family.</text>
</comment>
<proteinExistence type="inferred from homology"/>
<accession>B4T503</accession>
<name>AAS_SALNS</name>
<reference key="1">
    <citation type="journal article" date="2011" name="J. Bacteriol.">
        <title>Comparative genomics of 28 Salmonella enterica isolates: evidence for CRISPR-mediated adaptive sublineage evolution.</title>
        <authorList>
            <person name="Fricke W.F."/>
            <person name="Mammel M.K."/>
            <person name="McDermott P.F."/>
            <person name="Tartera C."/>
            <person name="White D.G."/>
            <person name="Leclerc J.E."/>
            <person name="Ravel J."/>
            <person name="Cebula T.A."/>
        </authorList>
    </citation>
    <scope>NUCLEOTIDE SEQUENCE [LARGE SCALE GENOMIC DNA]</scope>
    <source>
        <strain>SL254</strain>
    </source>
</reference>
<keyword id="KW-0012">Acyltransferase</keyword>
<keyword id="KW-0067">ATP-binding</keyword>
<keyword id="KW-0997">Cell inner membrane</keyword>
<keyword id="KW-1003">Cell membrane</keyword>
<keyword id="KW-0436">Ligase</keyword>
<keyword id="KW-0472">Membrane</keyword>
<keyword id="KW-0511">Multifunctional enzyme</keyword>
<keyword id="KW-0547">Nucleotide-binding</keyword>
<keyword id="KW-0808">Transferase</keyword>
<keyword id="KW-0812">Transmembrane</keyword>
<keyword id="KW-1133">Transmembrane helix</keyword>
<protein>
    <recommendedName>
        <fullName evidence="1">Bifunctional protein Aas</fullName>
    </recommendedName>
    <domain>
        <recommendedName>
            <fullName evidence="1">2-acylglycerophosphoethanolamine acyltransferase</fullName>
            <ecNumber evidence="1">2.3.1.40</ecNumber>
        </recommendedName>
        <alternativeName>
            <fullName evidence="1">2-acyl-GPE acyltransferase</fullName>
        </alternativeName>
        <alternativeName>
            <fullName evidence="1">Acyl-[acyl-carrier-protein]--phospholipid O-acyltransferase</fullName>
        </alternativeName>
    </domain>
    <domain>
        <recommendedName>
            <fullName evidence="1">Acyl-[acyl-carrier-protein] synthetase</fullName>
            <ecNumber evidence="1">6.2.1.20</ecNumber>
        </recommendedName>
        <alternativeName>
            <fullName evidence="1">Acyl-ACP synthetase</fullName>
        </alternativeName>
        <alternativeName>
            <fullName evidence="1">Long-chain-fatty-acid--[acyl-carrier-protein] ligase</fullName>
        </alternativeName>
    </domain>
</protein>
<organism>
    <name type="scientific">Salmonella newport (strain SL254)</name>
    <dbReference type="NCBI Taxonomy" id="423368"/>
    <lineage>
        <taxon>Bacteria</taxon>
        <taxon>Pseudomonadati</taxon>
        <taxon>Pseudomonadota</taxon>
        <taxon>Gammaproteobacteria</taxon>
        <taxon>Enterobacterales</taxon>
        <taxon>Enterobacteriaceae</taxon>
        <taxon>Salmonella</taxon>
    </lineage>
</organism>
<feature type="chain" id="PRO_1000137900" description="Bifunctional protein Aas">
    <location>
        <begin position="1"/>
        <end position="719"/>
    </location>
</feature>
<feature type="transmembrane region" description="Helical" evidence="1">
    <location>
        <begin position="258"/>
        <end position="277"/>
    </location>
</feature>
<feature type="transmembrane region" description="Helical" evidence="1">
    <location>
        <begin position="409"/>
        <end position="433"/>
    </location>
</feature>
<feature type="region of interest" description="Acyltransferase">
    <location>
        <begin position="15"/>
        <end position="138"/>
    </location>
</feature>
<feature type="region of interest" description="AMP-binding">
    <location>
        <begin position="233"/>
        <end position="646"/>
    </location>
</feature>
<feature type="active site" evidence="1">
    <location>
        <position position="36"/>
    </location>
</feature>
<dbReference type="EC" id="2.3.1.40" evidence="1"/>
<dbReference type="EC" id="6.2.1.20" evidence="1"/>
<dbReference type="EMBL" id="CP001113">
    <property type="protein sequence ID" value="ACF64294.1"/>
    <property type="molecule type" value="Genomic_DNA"/>
</dbReference>
<dbReference type="RefSeq" id="WP_000897114.1">
    <property type="nucleotide sequence ID" value="NZ_CCMR01000001.1"/>
</dbReference>
<dbReference type="SMR" id="B4T503"/>
<dbReference type="KEGG" id="see:SNSL254_A3238"/>
<dbReference type="HOGENOM" id="CLU_000022_59_8_6"/>
<dbReference type="Proteomes" id="UP000008824">
    <property type="component" value="Chromosome"/>
</dbReference>
<dbReference type="GO" id="GO:0005886">
    <property type="term" value="C:plasma membrane"/>
    <property type="evidence" value="ECO:0007669"/>
    <property type="project" value="UniProtKB-SubCell"/>
</dbReference>
<dbReference type="GO" id="GO:0008779">
    <property type="term" value="F:acyl-[acyl-carrier-protein]-phospholipid O-acyltransferase activity"/>
    <property type="evidence" value="ECO:0007669"/>
    <property type="project" value="UniProtKB-UniRule"/>
</dbReference>
<dbReference type="GO" id="GO:0005524">
    <property type="term" value="F:ATP binding"/>
    <property type="evidence" value="ECO:0007669"/>
    <property type="project" value="UniProtKB-KW"/>
</dbReference>
<dbReference type="GO" id="GO:0008922">
    <property type="term" value="F:long-chain fatty acid [acyl-carrier-protein] ligase activity"/>
    <property type="evidence" value="ECO:0007669"/>
    <property type="project" value="UniProtKB-UniRule"/>
</dbReference>
<dbReference type="GO" id="GO:0031956">
    <property type="term" value="F:medium-chain fatty acid-CoA ligase activity"/>
    <property type="evidence" value="ECO:0007669"/>
    <property type="project" value="TreeGrafter"/>
</dbReference>
<dbReference type="GO" id="GO:0006631">
    <property type="term" value="P:fatty acid metabolic process"/>
    <property type="evidence" value="ECO:0007669"/>
    <property type="project" value="InterPro"/>
</dbReference>
<dbReference type="GO" id="GO:0008654">
    <property type="term" value="P:phospholipid biosynthetic process"/>
    <property type="evidence" value="ECO:0007669"/>
    <property type="project" value="InterPro"/>
</dbReference>
<dbReference type="CDD" id="cd05909">
    <property type="entry name" value="AAS_C"/>
    <property type="match status" value="1"/>
</dbReference>
<dbReference type="CDD" id="cd07989">
    <property type="entry name" value="LPLAT_AGPAT-like"/>
    <property type="match status" value="1"/>
</dbReference>
<dbReference type="FunFam" id="3.30.300.30:FF:000009">
    <property type="entry name" value="Bifunctional protein Aas"/>
    <property type="match status" value="1"/>
</dbReference>
<dbReference type="FunFam" id="3.40.50.12780:FF:000009">
    <property type="entry name" value="Bifunctional protein Aas"/>
    <property type="match status" value="1"/>
</dbReference>
<dbReference type="Gene3D" id="3.30.300.30">
    <property type="match status" value="1"/>
</dbReference>
<dbReference type="Gene3D" id="3.40.50.12780">
    <property type="entry name" value="N-terminal domain of ligase-like"/>
    <property type="match status" value="1"/>
</dbReference>
<dbReference type="HAMAP" id="MF_01162">
    <property type="entry name" value="Aas"/>
    <property type="match status" value="1"/>
</dbReference>
<dbReference type="InterPro" id="IPR023775">
    <property type="entry name" value="Aas"/>
</dbReference>
<dbReference type="InterPro" id="IPR045851">
    <property type="entry name" value="AMP-bd_C_sf"/>
</dbReference>
<dbReference type="InterPro" id="IPR020845">
    <property type="entry name" value="AMP-binding_CS"/>
</dbReference>
<dbReference type="InterPro" id="IPR000873">
    <property type="entry name" value="AMP-dep_synth/lig_dom"/>
</dbReference>
<dbReference type="InterPro" id="IPR042099">
    <property type="entry name" value="ANL_N_sf"/>
</dbReference>
<dbReference type="InterPro" id="IPR002123">
    <property type="entry name" value="Plipid/glycerol_acylTrfase"/>
</dbReference>
<dbReference type="NCBIfam" id="NF005959">
    <property type="entry name" value="PRK08043.1"/>
    <property type="match status" value="1"/>
</dbReference>
<dbReference type="PANTHER" id="PTHR43201">
    <property type="entry name" value="ACYL-COA SYNTHETASE"/>
    <property type="match status" value="1"/>
</dbReference>
<dbReference type="PANTHER" id="PTHR43201:SF8">
    <property type="entry name" value="ACYL-COA SYNTHETASE FAMILY MEMBER 3"/>
    <property type="match status" value="1"/>
</dbReference>
<dbReference type="Pfam" id="PF01553">
    <property type="entry name" value="Acyltransferase"/>
    <property type="match status" value="1"/>
</dbReference>
<dbReference type="Pfam" id="PF00501">
    <property type="entry name" value="AMP-binding"/>
    <property type="match status" value="1"/>
</dbReference>
<dbReference type="SMART" id="SM00563">
    <property type="entry name" value="PlsC"/>
    <property type="match status" value="1"/>
</dbReference>
<dbReference type="SUPFAM" id="SSF56801">
    <property type="entry name" value="Acetyl-CoA synthetase-like"/>
    <property type="match status" value="1"/>
</dbReference>
<dbReference type="SUPFAM" id="SSF69593">
    <property type="entry name" value="Glycerol-3-phosphate (1)-acyltransferase"/>
    <property type="match status" value="1"/>
</dbReference>
<dbReference type="PROSITE" id="PS00455">
    <property type="entry name" value="AMP_BINDING"/>
    <property type="match status" value="1"/>
</dbReference>
<sequence>MLFGFFRNLFRVLYRVRVTGDVRVLQGNRVLITPNHVSFIDGMLLALFLPVRPVFAVYTSISQQWYMRWLTPLIDFVPLDPTKPMSIKHLVRLVEQGRPVVIFPEGRISVTGSLMKIYDGAGFVAAKSGATVIPLRIDGAELTPFSRLKGLVKRRLFPRIQLHILPSTQIPMPEAPRARDRRKIAGEMLHQIMMEARMAVRPRETLYESLLAAQYRYGAGKNCIEDINFTPDTYRKLLTKTLFVGRILEKYSVEGEKIGLMLPNAAISAAVIFGAVSRRRIPAMMNYTAGVKGLTSAITAAEIKTIFTSRQFLDKGKLWHLPEQLTQVRWVYLEDLKADVTPADKLWIFAHLLAPRLAQVKQQPEDAAIILFTSGSEGHPKGVVHSHKSILANVEQIKTIADFTANDRFMSALPLFHSFGLTVGLFTPLLTGAEVFLYPSPLHYRIVPELVYDRNCTVLFGTSTFLGNYARFANPYDFYRLRYVVAGAEKLQESTKQLWQDKFGLRILEGYGVTECAPVVSINVPMAAKPGTVGRILPGMDARLLAVPGIENGGRLQLKGPNIMNGYLRVEKPGVLEVPSAENSRGETERGWYDTGDIVRFDENGFVQIQGRAKRFAKIAGEMVSLEMVEQLALGVSADKMHATAIKSDASKGEALVLFTTDSELTREKLQHYAREHGIPELAVPRDIRYLKQLPLLGSGKPDFVTLKSWVDAPEQHHE</sequence>